<dbReference type="EMBL" id="AM494475">
    <property type="protein sequence ID" value="CAM79428.1"/>
    <property type="molecule type" value="Genomic_DNA"/>
</dbReference>
<dbReference type="RefSeq" id="WP_011944426.1">
    <property type="nucleotide sequence ID" value="NC_009488.1"/>
</dbReference>
<dbReference type="SMR" id="A5CCJ8"/>
<dbReference type="KEGG" id="ots:OTBS_0362"/>
<dbReference type="eggNOG" id="COG0096">
    <property type="taxonomic scope" value="Bacteria"/>
</dbReference>
<dbReference type="HOGENOM" id="CLU_098428_0_0_5"/>
<dbReference type="Proteomes" id="UP000001565">
    <property type="component" value="Chromosome"/>
</dbReference>
<dbReference type="GO" id="GO:1990904">
    <property type="term" value="C:ribonucleoprotein complex"/>
    <property type="evidence" value="ECO:0007669"/>
    <property type="project" value="UniProtKB-KW"/>
</dbReference>
<dbReference type="GO" id="GO:0005840">
    <property type="term" value="C:ribosome"/>
    <property type="evidence" value="ECO:0007669"/>
    <property type="project" value="UniProtKB-KW"/>
</dbReference>
<dbReference type="GO" id="GO:0019843">
    <property type="term" value="F:rRNA binding"/>
    <property type="evidence" value="ECO:0007669"/>
    <property type="project" value="UniProtKB-UniRule"/>
</dbReference>
<dbReference type="GO" id="GO:0003735">
    <property type="term" value="F:structural constituent of ribosome"/>
    <property type="evidence" value="ECO:0007669"/>
    <property type="project" value="InterPro"/>
</dbReference>
<dbReference type="GO" id="GO:0006412">
    <property type="term" value="P:translation"/>
    <property type="evidence" value="ECO:0007669"/>
    <property type="project" value="UniProtKB-UniRule"/>
</dbReference>
<dbReference type="FunFam" id="3.30.1370.30:FF:000002">
    <property type="entry name" value="30S ribosomal protein S8"/>
    <property type="match status" value="1"/>
</dbReference>
<dbReference type="FunFam" id="3.30.1490.10:FF:000001">
    <property type="entry name" value="30S ribosomal protein S8"/>
    <property type="match status" value="1"/>
</dbReference>
<dbReference type="Gene3D" id="3.30.1370.30">
    <property type="match status" value="1"/>
</dbReference>
<dbReference type="Gene3D" id="3.30.1490.10">
    <property type="match status" value="1"/>
</dbReference>
<dbReference type="HAMAP" id="MF_01302_B">
    <property type="entry name" value="Ribosomal_uS8_B"/>
    <property type="match status" value="1"/>
</dbReference>
<dbReference type="InterPro" id="IPR000630">
    <property type="entry name" value="Ribosomal_uS8"/>
</dbReference>
<dbReference type="InterPro" id="IPR047863">
    <property type="entry name" value="Ribosomal_uS8_CS"/>
</dbReference>
<dbReference type="InterPro" id="IPR035987">
    <property type="entry name" value="Ribosomal_uS8_sf"/>
</dbReference>
<dbReference type="NCBIfam" id="NF001109">
    <property type="entry name" value="PRK00136.1"/>
    <property type="match status" value="1"/>
</dbReference>
<dbReference type="PANTHER" id="PTHR11758">
    <property type="entry name" value="40S RIBOSOMAL PROTEIN S15A"/>
    <property type="match status" value="1"/>
</dbReference>
<dbReference type="Pfam" id="PF00410">
    <property type="entry name" value="Ribosomal_S8"/>
    <property type="match status" value="1"/>
</dbReference>
<dbReference type="SUPFAM" id="SSF56047">
    <property type="entry name" value="Ribosomal protein S8"/>
    <property type="match status" value="1"/>
</dbReference>
<dbReference type="PROSITE" id="PS00053">
    <property type="entry name" value="RIBOSOMAL_S8"/>
    <property type="match status" value="1"/>
</dbReference>
<reference key="1">
    <citation type="journal article" date="2007" name="Proc. Natl. Acad. Sci. U.S.A.">
        <title>The Orientia tsutsugamushi genome reveals massive proliferation of conjugative type IV secretion system and host-cell interaction genes.</title>
        <authorList>
            <person name="Cho N.-H."/>
            <person name="Kim H.-R."/>
            <person name="Lee J.-H."/>
            <person name="Kim S.-Y."/>
            <person name="Kim J."/>
            <person name="Cha S."/>
            <person name="Kim S.-Y."/>
            <person name="Darby A.C."/>
            <person name="Fuxelius H.-H."/>
            <person name="Yin J."/>
            <person name="Kim J.H."/>
            <person name="Kim J."/>
            <person name="Lee S.J."/>
            <person name="Koh Y.-S."/>
            <person name="Jang W.-J."/>
            <person name="Park K.-H."/>
            <person name="Andersson S.G.E."/>
            <person name="Choi M.-S."/>
            <person name="Kim I.-S."/>
        </authorList>
    </citation>
    <scope>NUCLEOTIDE SEQUENCE [LARGE SCALE GENOMIC DNA]</scope>
    <source>
        <strain>Boryong</strain>
    </source>
</reference>
<gene>
    <name evidence="1" type="primary">rpsH</name>
    <name type="ordered locus">OTBS_0362</name>
</gene>
<comment type="function">
    <text evidence="1">One of the primary rRNA binding proteins, it binds directly to 16S rRNA central domain where it helps coordinate assembly of the platform of the 30S subunit.</text>
</comment>
<comment type="subunit">
    <text evidence="1">Part of the 30S ribosomal subunit. Contacts proteins S5 and S12.</text>
</comment>
<comment type="similarity">
    <text evidence="1">Belongs to the universal ribosomal protein uS8 family.</text>
</comment>
<accession>A5CCJ8</accession>
<name>RS8_ORITB</name>
<keyword id="KW-1185">Reference proteome</keyword>
<keyword id="KW-0687">Ribonucleoprotein</keyword>
<keyword id="KW-0689">Ribosomal protein</keyword>
<keyword id="KW-0694">RNA-binding</keyword>
<keyword id="KW-0699">rRNA-binding</keyword>
<protein>
    <recommendedName>
        <fullName evidence="1">Small ribosomal subunit protein uS8</fullName>
    </recommendedName>
    <alternativeName>
        <fullName evidence="2">30S ribosomal protein S8</fullName>
    </alternativeName>
</protein>
<evidence type="ECO:0000255" key="1">
    <source>
        <dbReference type="HAMAP-Rule" id="MF_01302"/>
    </source>
</evidence>
<evidence type="ECO:0000305" key="2"/>
<proteinExistence type="inferred from homology"/>
<feature type="chain" id="PRO_0000305753" description="Small ribosomal subunit protein uS8">
    <location>
        <begin position="1"/>
        <end position="133"/>
    </location>
</feature>
<organism>
    <name type="scientific">Orientia tsutsugamushi (strain Boryong)</name>
    <name type="common">Rickettsia tsutsugamushi</name>
    <dbReference type="NCBI Taxonomy" id="357244"/>
    <lineage>
        <taxon>Bacteria</taxon>
        <taxon>Pseudomonadati</taxon>
        <taxon>Pseudomonadota</taxon>
        <taxon>Alphaproteobacteria</taxon>
        <taxon>Rickettsiales</taxon>
        <taxon>Rickettsiaceae</taxon>
        <taxon>Rickettsieae</taxon>
        <taxon>Orientia</taxon>
    </lineage>
</organism>
<sequence length="133" mass="15249">MSMSDTLADMLTRIRNAQRSRLMYVNVPSSRRREAILDVLVKEGFIHSFLIHEVRNGIKEINIKLKYSPKGESNIKEINRVSTPGKRVYLSIKKLRPYYNNMGIYIISTSKGIMSDREARKLGVGGEVICKVF</sequence>